<gene>
    <name evidence="2" type="primary">nuoB</name>
    <name type="ordered locus">Veis_2812</name>
</gene>
<name>NUOB_VEREI</name>
<protein>
    <recommendedName>
        <fullName evidence="2">NADH-quinone oxidoreductase subunit B</fullName>
        <ecNumber evidence="2">7.1.1.-</ecNumber>
    </recommendedName>
    <alternativeName>
        <fullName evidence="2">NADH dehydrogenase I subunit B</fullName>
    </alternativeName>
    <alternativeName>
        <fullName evidence="2">NDH-1 subunit B</fullName>
    </alternativeName>
</protein>
<evidence type="ECO:0000250" key="1"/>
<evidence type="ECO:0000255" key="2">
    <source>
        <dbReference type="HAMAP-Rule" id="MF_01356"/>
    </source>
</evidence>
<dbReference type="EC" id="7.1.1.-" evidence="2"/>
<dbReference type="EMBL" id="CP000542">
    <property type="protein sequence ID" value="ABM58550.1"/>
    <property type="molecule type" value="Genomic_DNA"/>
</dbReference>
<dbReference type="RefSeq" id="WP_011810547.1">
    <property type="nucleotide sequence ID" value="NC_008786.1"/>
</dbReference>
<dbReference type="SMR" id="A1WLP3"/>
<dbReference type="STRING" id="391735.Veis_2812"/>
<dbReference type="GeneID" id="76461310"/>
<dbReference type="KEGG" id="vei:Veis_2812"/>
<dbReference type="eggNOG" id="COG0377">
    <property type="taxonomic scope" value="Bacteria"/>
</dbReference>
<dbReference type="HOGENOM" id="CLU_055737_7_3_4"/>
<dbReference type="OrthoDB" id="9786737at2"/>
<dbReference type="Proteomes" id="UP000000374">
    <property type="component" value="Chromosome"/>
</dbReference>
<dbReference type="GO" id="GO:0005886">
    <property type="term" value="C:plasma membrane"/>
    <property type="evidence" value="ECO:0007669"/>
    <property type="project" value="UniProtKB-SubCell"/>
</dbReference>
<dbReference type="GO" id="GO:0045271">
    <property type="term" value="C:respiratory chain complex I"/>
    <property type="evidence" value="ECO:0007669"/>
    <property type="project" value="TreeGrafter"/>
</dbReference>
<dbReference type="GO" id="GO:0051539">
    <property type="term" value="F:4 iron, 4 sulfur cluster binding"/>
    <property type="evidence" value="ECO:0007669"/>
    <property type="project" value="UniProtKB-KW"/>
</dbReference>
<dbReference type="GO" id="GO:0005506">
    <property type="term" value="F:iron ion binding"/>
    <property type="evidence" value="ECO:0007669"/>
    <property type="project" value="UniProtKB-UniRule"/>
</dbReference>
<dbReference type="GO" id="GO:0008137">
    <property type="term" value="F:NADH dehydrogenase (ubiquinone) activity"/>
    <property type="evidence" value="ECO:0007669"/>
    <property type="project" value="InterPro"/>
</dbReference>
<dbReference type="GO" id="GO:0050136">
    <property type="term" value="F:NADH:ubiquinone reductase (non-electrogenic) activity"/>
    <property type="evidence" value="ECO:0007669"/>
    <property type="project" value="UniProtKB-UniRule"/>
</dbReference>
<dbReference type="GO" id="GO:0048038">
    <property type="term" value="F:quinone binding"/>
    <property type="evidence" value="ECO:0007669"/>
    <property type="project" value="UniProtKB-KW"/>
</dbReference>
<dbReference type="GO" id="GO:0009060">
    <property type="term" value="P:aerobic respiration"/>
    <property type="evidence" value="ECO:0007669"/>
    <property type="project" value="TreeGrafter"/>
</dbReference>
<dbReference type="GO" id="GO:0015990">
    <property type="term" value="P:electron transport coupled proton transport"/>
    <property type="evidence" value="ECO:0007669"/>
    <property type="project" value="TreeGrafter"/>
</dbReference>
<dbReference type="FunFam" id="3.40.50.12280:FF:000001">
    <property type="entry name" value="NADH-quinone oxidoreductase subunit B 2"/>
    <property type="match status" value="1"/>
</dbReference>
<dbReference type="Gene3D" id="3.40.50.12280">
    <property type="match status" value="1"/>
</dbReference>
<dbReference type="HAMAP" id="MF_01356">
    <property type="entry name" value="NDH1_NuoB"/>
    <property type="match status" value="1"/>
</dbReference>
<dbReference type="InterPro" id="IPR006137">
    <property type="entry name" value="NADH_UbQ_OxRdtase-like_20kDa"/>
</dbReference>
<dbReference type="InterPro" id="IPR006138">
    <property type="entry name" value="NADH_UQ_OxRdtase_20Kd_su"/>
</dbReference>
<dbReference type="NCBIfam" id="TIGR01957">
    <property type="entry name" value="nuoB_fam"/>
    <property type="match status" value="1"/>
</dbReference>
<dbReference type="NCBIfam" id="NF005012">
    <property type="entry name" value="PRK06411.1"/>
    <property type="match status" value="1"/>
</dbReference>
<dbReference type="PANTHER" id="PTHR11995">
    <property type="entry name" value="NADH DEHYDROGENASE"/>
    <property type="match status" value="1"/>
</dbReference>
<dbReference type="PANTHER" id="PTHR11995:SF14">
    <property type="entry name" value="NADH DEHYDROGENASE [UBIQUINONE] IRON-SULFUR PROTEIN 7, MITOCHONDRIAL"/>
    <property type="match status" value="1"/>
</dbReference>
<dbReference type="Pfam" id="PF01058">
    <property type="entry name" value="Oxidored_q6"/>
    <property type="match status" value="1"/>
</dbReference>
<dbReference type="SUPFAM" id="SSF56770">
    <property type="entry name" value="HydA/Nqo6-like"/>
    <property type="match status" value="1"/>
</dbReference>
<dbReference type="PROSITE" id="PS01150">
    <property type="entry name" value="COMPLEX1_20K"/>
    <property type="match status" value="1"/>
</dbReference>
<reference key="1">
    <citation type="submission" date="2006-12" db="EMBL/GenBank/DDBJ databases">
        <title>Complete sequence of chromosome 1 of Verminephrobacter eiseniae EF01-2.</title>
        <authorList>
            <person name="Copeland A."/>
            <person name="Lucas S."/>
            <person name="Lapidus A."/>
            <person name="Barry K."/>
            <person name="Detter J.C."/>
            <person name="Glavina del Rio T."/>
            <person name="Dalin E."/>
            <person name="Tice H."/>
            <person name="Pitluck S."/>
            <person name="Chertkov O."/>
            <person name="Brettin T."/>
            <person name="Bruce D."/>
            <person name="Han C."/>
            <person name="Tapia R."/>
            <person name="Gilna P."/>
            <person name="Schmutz J."/>
            <person name="Larimer F."/>
            <person name="Land M."/>
            <person name="Hauser L."/>
            <person name="Kyrpides N."/>
            <person name="Kim E."/>
            <person name="Stahl D."/>
            <person name="Richardson P."/>
        </authorList>
    </citation>
    <scope>NUCLEOTIDE SEQUENCE [LARGE SCALE GENOMIC DNA]</scope>
    <source>
        <strain>EF01-2</strain>
    </source>
</reference>
<sequence>MIENVMKEGFITTSYDSVVNWAKTGSLWPMTFGLACCAVEMIHSAAARYDLARFGAEVFRASPRQADLMIVAGTLCNKMAPALRKVYDQMSEPRWVLSMGSCANGGGYYHYSYSVVRGCDRIVPVDVYVPGCPPTAEALIYGILQLQQKIRRSHTIARA</sequence>
<comment type="function">
    <text evidence="1">NDH-1 shuttles electrons from NADH, via FMN and iron-sulfur (Fe-S) centers, to quinones in the respiratory chain. Couples the redox reaction to proton translocation (for every two electrons transferred, four hydrogen ions are translocated across the cytoplasmic membrane), and thus conserves the redox energy in a proton gradient (By similarity).</text>
</comment>
<comment type="catalytic activity">
    <reaction evidence="2">
        <text>a quinone + NADH + 5 H(+)(in) = a quinol + NAD(+) + 4 H(+)(out)</text>
        <dbReference type="Rhea" id="RHEA:57888"/>
        <dbReference type="ChEBI" id="CHEBI:15378"/>
        <dbReference type="ChEBI" id="CHEBI:24646"/>
        <dbReference type="ChEBI" id="CHEBI:57540"/>
        <dbReference type="ChEBI" id="CHEBI:57945"/>
        <dbReference type="ChEBI" id="CHEBI:132124"/>
    </reaction>
</comment>
<comment type="cofactor">
    <cofactor evidence="2">
        <name>[4Fe-4S] cluster</name>
        <dbReference type="ChEBI" id="CHEBI:49883"/>
    </cofactor>
    <text evidence="2">Binds 1 [4Fe-4S] cluster.</text>
</comment>
<comment type="subunit">
    <text evidence="2">NDH-1 is composed of 14 different subunits. Subunits NuoB, C, D, E, F, and G constitute the peripheral sector of the complex.</text>
</comment>
<comment type="subcellular location">
    <subcellularLocation>
        <location evidence="2">Cell inner membrane</location>
        <topology evidence="2">Peripheral membrane protein</topology>
        <orientation evidence="2">Cytoplasmic side</orientation>
    </subcellularLocation>
</comment>
<comment type="similarity">
    <text evidence="2">Belongs to the complex I 20 kDa subunit family.</text>
</comment>
<feature type="chain" id="PRO_0000358504" description="NADH-quinone oxidoreductase subunit B">
    <location>
        <begin position="1"/>
        <end position="159"/>
    </location>
</feature>
<feature type="binding site" evidence="2">
    <location>
        <position position="36"/>
    </location>
    <ligand>
        <name>[4Fe-4S] cluster</name>
        <dbReference type="ChEBI" id="CHEBI:49883"/>
    </ligand>
</feature>
<feature type="binding site" evidence="2">
    <location>
        <position position="37"/>
    </location>
    <ligand>
        <name>[4Fe-4S] cluster</name>
        <dbReference type="ChEBI" id="CHEBI:49883"/>
    </ligand>
</feature>
<feature type="binding site" evidence="2">
    <location>
        <position position="102"/>
    </location>
    <ligand>
        <name>[4Fe-4S] cluster</name>
        <dbReference type="ChEBI" id="CHEBI:49883"/>
    </ligand>
</feature>
<feature type="binding site" evidence="2">
    <location>
        <position position="132"/>
    </location>
    <ligand>
        <name>[4Fe-4S] cluster</name>
        <dbReference type="ChEBI" id="CHEBI:49883"/>
    </ligand>
</feature>
<keyword id="KW-0004">4Fe-4S</keyword>
<keyword id="KW-0997">Cell inner membrane</keyword>
<keyword id="KW-1003">Cell membrane</keyword>
<keyword id="KW-0408">Iron</keyword>
<keyword id="KW-0411">Iron-sulfur</keyword>
<keyword id="KW-0472">Membrane</keyword>
<keyword id="KW-0479">Metal-binding</keyword>
<keyword id="KW-0520">NAD</keyword>
<keyword id="KW-0874">Quinone</keyword>
<keyword id="KW-1185">Reference proteome</keyword>
<keyword id="KW-1278">Translocase</keyword>
<keyword id="KW-0813">Transport</keyword>
<keyword id="KW-0830">Ubiquinone</keyword>
<accession>A1WLP3</accession>
<proteinExistence type="inferred from homology"/>
<organism>
    <name type="scientific">Verminephrobacter eiseniae (strain EF01-2)</name>
    <dbReference type="NCBI Taxonomy" id="391735"/>
    <lineage>
        <taxon>Bacteria</taxon>
        <taxon>Pseudomonadati</taxon>
        <taxon>Pseudomonadota</taxon>
        <taxon>Betaproteobacteria</taxon>
        <taxon>Burkholderiales</taxon>
        <taxon>Comamonadaceae</taxon>
        <taxon>Verminephrobacter</taxon>
    </lineage>
</organism>